<accession>B0R6C7</accession>
<reference key="1">
    <citation type="journal article" date="2008" name="Genomics">
        <title>Evolution in the laboratory: the genome of Halobacterium salinarum strain R1 compared to that of strain NRC-1.</title>
        <authorList>
            <person name="Pfeiffer F."/>
            <person name="Schuster S.C."/>
            <person name="Broicher A."/>
            <person name="Falb M."/>
            <person name="Palm P."/>
            <person name="Rodewald K."/>
            <person name="Ruepp A."/>
            <person name="Soppa J."/>
            <person name="Tittor J."/>
            <person name="Oesterhelt D."/>
        </authorList>
    </citation>
    <scope>NUCLEOTIDE SEQUENCE [LARGE SCALE GENOMIC DNA]</scope>
    <source>
        <strain>ATCC 29341 / DSM 671 / R1</strain>
    </source>
</reference>
<keyword id="KW-0235">DNA replication</keyword>
<keyword id="KW-0240">DNA-directed RNA polymerase</keyword>
<keyword id="KW-0460">Magnesium</keyword>
<keyword id="KW-0479">Metal-binding</keyword>
<keyword id="KW-0548">Nucleotidyltransferase</keyword>
<keyword id="KW-0639">Primosome</keyword>
<keyword id="KW-0804">Transcription</keyword>
<keyword id="KW-0808">Transferase</keyword>
<comment type="function">
    <text evidence="1">RNA polymerase that catalyzes the synthesis of short RNA molecules used as primers for DNA polymerase during DNA replication.</text>
</comment>
<comment type="catalytic activity">
    <reaction evidence="1">
        <text>ssDNA + n NTP = ssDNA/pppN(pN)n-1 hybrid + (n-1) diphosphate.</text>
        <dbReference type="EC" id="2.7.7.101"/>
    </reaction>
</comment>
<comment type="cofactor">
    <cofactor evidence="1">
        <name>Mg(2+)</name>
        <dbReference type="ChEBI" id="CHEBI:18420"/>
    </cofactor>
    <text evidence="1">Binds two Mg(2+) per subunit.</text>
</comment>
<comment type="subunit">
    <text evidence="1">Forms a ternary complex with MCM helicase and DNA.</text>
</comment>
<comment type="similarity">
    <text evidence="1">Belongs to the archaeal DnaG primase family.</text>
</comment>
<organism>
    <name type="scientific">Halobacterium salinarum (strain ATCC 29341 / DSM 671 / R1)</name>
    <dbReference type="NCBI Taxonomy" id="478009"/>
    <lineage>
        <taxon>Archaea</taxon>
        <taxon>Methanobacteriati</taxon>
        <taxon>Methanobacteriota</taxon>
        <taxon>Stenosarchaea group</taxon>
        <taxon>Halobacteria</taxon>
        <taxon>Halobacteriales</taxon>
        <taxon>Halobacteriaceae</taxon>
        <taxon>Halobacterium</taxon>
        <taxon>Halobacterium salinarum NRC-34001</taxon>
    </lineage>
</organism>
<protein>
    <recommendedName>
        <fullName evidence="1">DNA primase DnaG</fullName>
        <ecNumber evidence="1">2.7.7.101</ecNumber>
    </recommendedName>
</protein>
<sequence length="406" mass="42410">MEDTAKYLIHADFVVDGVVERSDVVGAAFGQTEGLLGDDLAIPDLQDSAKLGRIDVSVDSEGGQSFGDITIASSLDRVETATLAAALEAVERIGPCRADVEVDRIEDVRAAKRREVVDRAKELLATAFDEGAINADDILDEVRESVRVDDITDYDGYPAGPNVDSSDAVVIVEGRADVVTLLKYGIKNAVAVEGTNIPDAIAALSREKTATAFLDGDRGGDMILRELGQVGSLDFVARAPMGECVEDLSRRTVDSALRNKTPASAAAPIATTQSETAATDGSATPAPTPEPAPDTAPSPDSDGDDTEAAAPPTLAEHARAVADTETARLLDDALARIREVPAAEVVDAVADADSVPAVVVVDATITQRLLDVAAQRGVASLIGADTDEFVKQPLATRVRTLDDART</sequence>
<gene>
    <name evidence="1" type="primary">dnaG</name>
    <name type="ordered locus">OE_3509R</name>
</gene>
<proteinExistence type="inferred from homology"/>
<feature type="chain" id="PRO_1000089136" description="DNA primase DnaG">
    <location>
        <begin position="1"/>
        <end position="406"/>
    </location>
</feature>
<feature type="domain" description="Toprim" evidence="1">
    <location>
        <begin position="167"/>
        <end position="253"/>
    </location>
</feature>
<feature type="region of interest" description="Disordered" evidence="2">
    <location>
        <begin position="259"/>
        <end position="309"/>
    </location>
</feature>
<feature type="compositionally biased region" description="Low complexity" evidence="2">
    <location>
        <begin position="261"/>
        <end position="272"/>
    </location>
</feature>
<feature type="compositionally biased region" description="Pro residues" evidence="2">
    <location>
        <begin position="286"/>
        <end position="296"/>
    </location>
</feature>
<feature type="binding site" evidence="1">
    <location>
        <position position="173"/>
    </location>
    <ligand>
        <name>Mg(2+)</name>
        <dbReference type="ChEBI" id="CHEBI:18420"/>
        <label>1</label>
        <note>catalytic</note>
    </ligand>
</feature>
<feature type="binding site" evidence="1">
    <location>
        <position position="215"/>
    </location>
    <ligand>
        <name>Mg(2+)</name>
        <dbReference type="ChEBI" id="CHEBI:18420"/>
        <label>1</label>
        <note>catalytic</note>
    </ligand>
</feature>
<feature type="binding site" evidence="1">
    <location>
        <position position="215"/>
    </location>
    <ligand>
        <name>Mg(2+)</name>
        <dbReference type="ChEBI" id="CHEBI:18420"/>
        <label>2</label>
    </ligand>
</feature>
<feature type="binding site" evidence="1">
    <location>
        <position position="217"/>
    </location>
    <ligand>
        <name>Mg(2+)</name>
        <dbReference type="ChEBI" id="CHEBI:18420"/>
        <label>2</label>
    </ligand>
</feature>
<evidence type="ECO:0000255" key="1">
    <source>
        <dbReference type="HAMAP-Rule" id="MF_00007"/>
    </source>
</evidence>
<evidence type="ECO:0000256" key="2">
    <source>
        <dbReference type="SAM" id="MobiDB-lite"/>
    </source>
</evidence>
<dbReference type="EC" id="2.7.7.101" evidence="1"/>
<dbReference type="EMBL" id="AM774415">
    <property type="protein sequence ID" value="CAP14296.1"/>
    <property type="molecule type" value="Genomic_DNA"/>
</dbReference>
<dbReference type="RefSeq" id="WP_012289379.1">
    <property type="nucleotide sequence ID" value="NC_010364.1"/>
</dbReference>
<dbReference type="SMR" id="B0R6C7"/>
<dbReference type="EnsemblBacteria" id="CAP14296">
    <property type="protein sequence ID" value="CAP14296"/>
    <property type="gene ID" value="OE_3509R"/>
</dbReference>
<dbReference type="GeneID" id="68694423"/>
<dbReference type="KEGG" id="hsl:OE_3509R"/>
<dbReference type="HOGENOM" id="CLU_034626_0_0_2"/>
<dbReference type="PhylomeDB" id="B0R6C7"/>
<dbReference type="Proteomes" id="UP000001321">
    <property type="component" value="Chromosome"/>
</dbReference>
<dbReference type="GO" id="GO:0005737">
    <property type="term" value="C:cytoplasm"/>
    <property type="evidence" value="ECO:0007669"/>
    <property type="project" value="TreeGrafter"/>
</dbReference>
<dbReference type="GO" id="GO:0000428">
    <property type="term" value="C:DNA-directed RNA polymerase complex"/>
    <property type="evidence" value="ECO:0007669"/>
    <property type="project" value="UniProtKB-KW"/>
</dbReference>
<dbReference type="GO" id="GO:0000178">
    <property type="term" value="C:exosome (RNase complex)"/>
    <property type="evidence" value="ECO:0007669"/>
    <property type="project" value="InterPro"/>
</dbReference>
<dbReference type="GO" id="GO:1990077">
    <property type="term" value="C:primosome complex"/>
    <property type="evidence" value="ECO:0007669"/>
    <property type="project" value="UniProtKB-KW"/>
</dbReference>
<dbReference type="GO" id="GO:0003899">
    <property type="term" value="F:DNA-directed RNA polymerase activity"/>
    <property type="evidence" value="ECO:0007669"/>
    <property type="project" value="InterPro"/>
</dbReference>
<dbReference type="GO" id="GO:0046872">
    <property type="term" value="F:metal ion binding"/>
    <property type="evidence" value="ECO:0007669"/>
    <property type="project" value="UniProtKB-KW"/>
</dbReference>
<dbReference type="GO" id="GO:0008143">
    <property type="term" value="F:poly(A) binding"/>
    <property type="evidence" value="ECO:0007669"/>
    <property type="project" value="InterPro"/>
</dbReference>
<dbReference type="GO" id="GO:0006269">
    <property type="term" value="P:DNA replication, synthesis of primer"/>
    <property type="evidence" value="ECO:0007669"/>
    <property type="project" value="UniProtKB-UniRule"/>
</dbReference>
<dbReference type="CDD" id="cd01029">
    <property type="entry name" value="TOPRIM_primases"/>
    <property type="match status" value="1"/>
</dbReference>
<dbReference type="Gene3D" id="3.40.1360.10">
    <property type="match status" value="1"/>
</dbReference>
<dbReference type="HAMAP" id="MF_00007">
    <property type="entry name" value="DNA_primase_DnaG_arc"/>
    <property type="match status" value="1"/>
</dbReference>
<dbReference type="InterPro" id="IPR050219">
    <property type="entry name" value="DnaG_primase"/>
</dbReference>
<dbReference type="InterPro" id="IPR020607">
    <property type="entry name" value="Primase_DnaG_arc"/>
</dbReference>
<dbReference type="InterPro" id="IPR034154">
    <property type="entry name" value="TOPRIM_DnaG/twinkle"/>
</dbReference>
<dbReference type="InterPro" id="IPR006171">
    <property type="entry name" value="TOPRIM_dom"/>
</dbReference>
<dbReference type="NCBIfam" id="NF003108">
    <property type="entry name" value="PRK04031.1-1"/>
    <property type="match status" value="1"/>
</dbReference>
<dbReference type="PANTHER" id="PTHR30313">
    <property type="entry name" value="DNA PRIMASE"/>
    <property type="match status" value="1"/>
</dbReference>
<dbReference type="PANTHER" id="PTHR30313:SF2">
    <property type="entry name" value="DNA PRIMASE"/>
    <property type="match status" value="1"/>
</dbReference>
<dbReference type="Pfam" id="PF13662">
    <property type="entry name" value="Toprim_4"/>
    <property type="match status" value="1"/>
</dbReference>
<dbReference type="SMART" id="SM00493">
    <property type="entry name" value="TOPRIM"/>
    <property type="match status" value="1"/>
</dbReference>
<dbReference type="SUPFAM" id="SSF56731">
    <property type="entry name" value="DNA primase core"/>
    <property type="match status" value="1"/>
</dbReference>
<dbReference type="PROSITE" id="PS50880">
    <property type="entry name" value="TOPRIM"/>
    <property type="match status" value="1"/>
</dbReference>
<name>DNAG_HALS3</name>